<reference key="1">
    <citation type="journal article" date="2005" name="Genome Res.">
        <title>Comparative and functional genomic analyses of the pathogenicity of phytopathogen Xanthomonas campestris pv. campestris.</title>
        <authorList>
            <person name="Qian W."/>
            <person name="Jia Y."/>
            <person name="Ren S.-X."/>
            <person name="He Y.-Q."/>
            <person name="Feng J.-X."/>
            <person name="Lu L.-F."/>
            <person name="Sun Q."/>
            <person name="Ying G."/>
            <person name="Tang D.-J."/>
            <person name="Tang H."/>
            <person name="Wu W."/>
            <person name="Hao P."/>
            <person name="Wang L."/>
            <person name="Jiang B.-L."/>
            <person name="Zeng S."/>
            <person name="Gu W.-Y."/>
            <person name="Lu G."/>
            <person name="Rong L."/>
            <person name="Tian Y."/>
            <person name="Yao Z."/>
            <person name="Fu G."/>
            <person name="Chen B."/>
            <person name="Fang R."/>
            <person name="Qiang B."/>
            <person name="Chen Z."/>
            <person name="Zhao G.-P."/>
            <person name="Tang J.-L."/>
            <person name="He C."/>
        </authorList>
    </citation>
    <scope>NUCLEOTIDE SEQUENCE [LARGE SCALE GENOMIC DNA]</scope>
    <source>
        <strain>8004</strain>
    </source>
</reference>
<keyword id="KW-0963">Cytoplasm</keyword>
<keyword id="KW-0396">Initiation factor</keyword>
<keyword id="KW-0648">Protein biosynthesis</keyword>
<keyword id="KW-0694">RNA-binding</keyword>
<keyword id="KW-0699">rRNA-binding</keyword>
<comment type="function">
    <text evidence="1">One of the essential components for the initiation of protein synthesis. Stabilizes the binding of IF-2 and IF-3 on the 30S subunit to which N-formylmethionyl-tRNA(fMet) subsequently binds. Helps modulate mRNA selection, yielding the 30S pre-initiation complex (PIC). Upon addition of the 50S ribosomal subunit IF-1, IF-2 and IF-3 are released leaving the mature 70S translation initiation complex.</text>
</comment>
<comment type="subunit">
    <text evidence="1">Component of the 30S ribosomal translation pre-initiation complex which assembles on the 30S ribosome in the order IF-2 and IF-3, IF-1 and N-formylmethionyl-tRNA(fMet); mRNA recruitment can occur at any time during PIC assembly.</text>
</comment>
<comment type="subcellular location">
    <subcellularLocation>
        <location evidence="1">Cytoplasm</location>
    </subcellularLocation>
</comment>
<comment type="similarity">
    <text evidence="1">Belongs to the IF-1 family.</text>
</comment>
<feature type="chain" id="PRO_0000263897" description="Translation initiation factor IF-1">
    <location>
        <begin position="1"/>
        <end position="72"/>
    </location>
</feature>
<feature type="domain" description="S1-like" evidence="1">
    <location>
        <begin position="1"/>
        <end position="72"/>
    </location>
</feature>
<accession>Q4UUK1</accession>
<evidence type="ECO:0000255" key="1">
    <source>
        <dbReference type="HAMAP-Rule" id="MF_00075"/>
    </source>
</evidence>
<sequence length="72" mass="8402">MSKDDSIEFEGSVSETLPNTTFRVKLENGYEIIAHISGRMRKNYIRILTGDRVKVEMTPYDLTKGRITYRMK</sequence>
<name>IF1_XANC8</name>
<organism>
    <name type="scientific">Xanthomonas campestris pv. campestris (strain 8004)</name>
    <dbReference type="NCBI Taxonomy" id="314565"/>
    <lineage>
        <taxon>Bacteria</taxon>
        <taxon>Pseudomonadati</taxon>
        <taxon>Pseudomonadota</taxon>
        <taxon>Gammaproteobacteria</taxon>
        <taxon>Lysobacterales</taxon>
        <taxon>Lysobacteraceae</taxon>
        <taxon>Xanthomonas</taxon>
    </lineage>
</organism>
<protein>
    <recommendedName>
        <fullName evidence="1">Translation initiation factor IF-1</fullName>
    </recommendedName>
</protein>
<dbReference type="EMBL" id="CP000050">
    <property type="protein sequence ID" value="AAY49272.1"/>
    <property type="molecule type" value="Genomic_DNA"/>
</dbReference>
<dbReference type="RefSeq" id="WP_011037132.1">
    <property type="nucleotide sequence ID" value="NZ_CP155948.1"/>
</dbReference>
<dbReference type="SMR" id="Q4UUK1"/>
<dbReference type="KEGG" id="xcb:XC_2217"/>
<dbReference type="HOGENOM" id="CLU_151267_1_0_6"/>
<dbReference type="Proteomes" id="UP000000420">
    <property type="component" value="Chromosome"/>
</dbReference>
<dbReference type="GO" id="GO:0005829">
    <property type="term" value="C:cytosol"/>
    <property type="evidence" value="ECO:0007669"/>
    <property type="project" value="TreeGrafter"/>
</dbReference>
<dbReference type="GO" id="GO:0043022">
    <property type="term" value="F:ribosome binding"/>
    <property type="evidence" value="ECO:0007669"/>
    <property type="project" value="UniProtKB-UniRule"/>
</dbReference>
<dbReference type="GO" id="GO:0019843">
    <property type="term" value="F:rRNA binding"/>
    <property type="evidence" value="ECO:0007669"/>
    <property type="project" value="UniProtKB-UniRule"/>
</dbReference>
<dbReference type="GO" id="GO:0003743">
    <property type="term" value="F:translation initiation factor activity"/>
    <property type="evidence" value="ECO:0007669"/>
    <property type="project" value="UniProtKB-UniRule"/>
</dbReference>
<dbReference type="CDD" id="cd04451">
    <property type="entry name" value="S1_IF1"/>
    <property type="match status" value="1"/>
</dbReference>
<dbReference type="FunFam" id="2.40.50.140:FF:000002">
    <property type="entry name" value="Translation initiation factor IF-1"/>
    <property type="match status" value="1"/>
</dbReference>
<dbReference type="Gene3D" id="2.40.50.140">
    <property type="entry name" value="Nucleic acid-binding proteins"/>
    <property type="match status" value="1"/>
</dbReference>
<dbReference type="HAMAP" id="MF_00075">
    <property type="entry name" value="IF_1"/>
    <property type="match status" value="1"/>
</dbReference>
<dbReference type="InterPro" id="IPR012340">
    <property type="entry name" value="NA-bd_OB-fold"/>
</dbReference>
<dbReference type="InterPro" id="IPR006196">
    <property type="entry name" value="RNA-binding_domain_S1_IF1"/>
</dbReference>
<dbReference type="InterPro" id="IPR003029">
    <property type="entry name" value="S1_domain"/>
</dbReference>
<dbReference type="InterPro" id="IPR004368">
    <property type="entry name" value="TIF_IF1"/>
</dbReference>
<dbReference type="NCBIfam" id="TIGR00008">
    <property type="entry name" value="infA"/>
    <property type="match status" value="1"/>
</dbReference>
<dbReference type="PANTHER" id="PTHR33370">
    <property type="entry name" value="TRANSLATION INITIATION FACTOR IF-1, CHLOROPLASTIC"/>
    <property type="match status" value="1"/>
</dbReference>
<dbReference type="PANTHER" id="PTHR33370:SF1">
    <property type="entry name" value="TRANSLATION INITIATION FACTOR IF-1, CHLOROPLASTIC"/>
    <property type="match status" value="1"/>
</dbReference>
<dbReference type="Pfam" id="PF01176">
    <property type="entry name" value="eIF-1a"/>
    <property type="match status" value="1"/>
</dbReference>
<dbReference type="SMART" id="SM00316">
    <property type="entry name" value="S1"/>
    <property type="match status" value="1"/>
</dbReference>
<dbReference type="SUPFAM" id="SSF50249">
    <property type="entry name" value="Nucleic acid-binding proteins"/>
    <property type="match status" value="1"/>
</dbReference>
<dbReference type="PROSITE" id="PS50832">
    <property type="entry name" value="S1_IF1_TYPE"/>
    <property type="match status" value="1"/>
</dbReference>
<gene>
    <name evidence="1" type="primary">infA</name>
    <name type="ordered locus">XC_2217</name>
</gene>
<proteinExistence type="inferred from homology"/>